<organism>
    <name type="scientific">Caenorhabditis elegans</name>
    <dbReference type="NCBI Taxonomy" id="6239"/>
    <lineage>
        <taxon>Eukaryota</taxon>
        <taxon>Metazoa</taxon>
        <taxon>Ecdysozoa</taxon>
        <taxon>Nematoda</taxon>
        <taxon>Chromadorea</taxon>
        <taxon>Rhabditida</taxon>
        <taxon>Rhabditina</taxon>
        <taxon>Rhabditomorpha</taxon>
        <taxon>Rhabditoidea</taxon>
        <taxon>Rhabditidae</taxon>
        <taxon>Peloderinae</taxon>
        <taxon>Caenorhabditis</taxon>
    </lineage>
</organism>
<reference key="1">
    <citation type="journal article" date="1994" name="Nature">
        <title>2.2 Mb of contiguous nucleotide sequence from chromosome III of C. elegans.</title>
        <authorList>
            <person name="Wilson R."/>
            <person name="Ainscough R."/>
            <person name="Anderson K."/>
            <person name="Baynes C."/>
            <person name="Berks M."/>
            <person name="Bonfield J."/>
            <person name="Burton J."/>
            <person name="Connell M."/>
            <person name="Copsey T."/>
            <person name="Cooper J."/>
            <person name="Coulson A."/>
            <person name="Craxton M."/>
            <person name="Dear S."/>
            <person name="Du Z."/>
            <person name="Durbin R."/>
            <person name="Favello A."/>
            <person name="Fraser A."/>
            <person name="Fulton L."/>
            <person name="Gardner A."/>
            <person name="Green P."/>
            <person name="Hawkins T."/>
            <person name="Hillier L."/>
            <person name="Jier M."/>
            <person name="Johnston L."/>
            <person name="Jones M."/>
            <person name="Kershaw J."/>
            <person name="Kirsten J."/>
            <person name="Laisster N."/>
            <person name="Latreille P."/>
            <person name="Lightning J."/>
            <person name="Lloyd C."/>
            <person name="Mortimore B."/>
            <person name="O'Callaghan M."/>
            <person name="Parsons J."/>
            <person name="Percy C."/>
            <person name="Rifken L."/>
            <person name="Roopra A."/>
            <person name="Saunders D."/>
            <person name="Shownkeen R."/>
            <person name="Sims M."/>
            <person name="Smaldon N."/>
            <person name="Smith A."/>
            <person name="Smith M."/>
            <person name="Sonnhammer E."/>
            <person name="Staden R."/>
            <person name="Sulston J."/>
            <person name="Thierry-Mieg J."/>
            <person name="Thomas K."/>
            <person name="Vaudin M."/>
            <person name="Vaughan K."/>
            <person name="Waterston R."/>
            <person name="Watson A."/>
            <person name="Weinstock L."/>
            <person name="Wilkinson-Sproat J."/>
            <person name="Wohldman P."/>
        </authorList>
    </citation>
    <scope>NUCLEOTIDE SEQUENCE [LARGE SCALE GENOMIC DNA]</scope>
    <source>
        <strain>Bristol N2</strain>
    </source>
</reference>
<reference key="2">
    <citation type="journal article" date="1998" name="Science">
        <title>Genome sequence of the nematode C. elegans: a platform for investigating biology.</title>
        <authorList>
            <consortium name="The C. elegans sequencing consortium"/>
        </authorList>
    </citation>
    <scope>NUCLEOTIDE SEQUENCE [LARGE SCALE GENOMIC DNA]</scope>
    <source>
        <strain>Bristol N2</strain>
    </source>
</reference>
<protein>
    <recommendedName>
        <fullName>Uncharacterized protein ZK632.5</fullName>
    </recommendedName>
</protein>
<feature type="chain" id="PRO_0000065523" description="Uncharacterized protein ZK632.5">
    <location>
        <begin position="1"/>
        <end position="824"/>
    </location>
</feature>
<sequence length="824" mass="95727">MLSTLSFLIHGEQNVQQCQTISDLECLYLINKNQPLRDSNGNPLTAHELTDDLNERLVTLKLEAFRPVVSEVLDQLEEQDDALHYFVLVATSRLSDEDFENSLKEVSLSQKLMVRIDGEYKYRLYSKPIVRNNIPQLAWDISPALRTRKVAEKDEISPPNNTANVYPVDDWGLISREFRSILSCEELILSAREGQSIEFFHLDNQGFYRNLLDMHRGISSDLFQIDGDYHFYQSRPCRVQEWNLTTTRIILQKHIFIANQLAEAIQKLKNIFVTGTDNSIRLMMQKYLIDEQQIFFEYFEYIFDESASTSYNFQSIVENLPKLNIHDASCRFQICDDIFEIVSAHYHVIREMIQVVGNINDYSPIRLNEMSFTGSQSAPQFYAKRMWRRLNVELIRFIVNKLAEMLTTPDAELMELLTDAGDAKLIKDPSIWQRLNPLQMESSLCIDEDLANRVADLIIGYQFFVNDKKSKSQKLDEKTFAKSDIQDAEELELFAKTPEFEIIIQKILDRVDVNSVTEESEELTICINKLLEQIPTTTLVEKYSQIVLEKSIKFFEFLKLFFTSAYIHMRHSTFLNRYVLDTLEREKMLKQGYDPVFLRTIGYNERSTNEDSLLVVTPPEPLNVFVSKSVTDIYSQVFTVLRMLHTALNEVLETRNSETLTREPRLRYAFFHMNTTIFAIRKNMLTLIEQSYEAFMKTLDFKSKPDQRSSHELLNVCYRAHRKFIRDVAGALMLKSNAGTTGRIIRLMVGSVSQASNACVNGDAVGAEKFYQQFQNNLLIFLDQCRLDHIRYPLYRSLEIGSEETDGRRSLNSSYSDDLSCRSY</sequence>
<name>YOT5_CAEEL</name>
<dbReference type="EMBL" id="Z22181">
    <property type="protein sequence ID" value="CAA80182.1"/>
    <property type="molecule type" value="Genomic_DNA"/>
</dbReference>
<dbReference type="PIR" id="S40937">
    <property type="entry name" value="S40937"/>
</dbReference>
<dbReference type="SMR" id="P34651"/>
<dbReference type="BioGRID" id="41583">
    <property type="interactions" value="1"/>
</dbReference>
<dbReference type="FunCoup" id="P34651">
    <property type="interactions" value="1508"/>
</dbReference>
<dbReference type="STRING" id="6239.ZK632.5.1"/>
<dbReference type="PaxDb" id="6239-ZK632.5"/>
<dbReference type="PeptideAtlas" id="P34651"/>
<dbReference type="EnsemblMetazoa" id="ZK632.5.1">
    <property type="protein sequence ID" value="ZK632.5.1"/>
    <property type="gene ID" value="WBGene00014014"/>
</dbReference>
<dbReference type="KEGG" id="cel:CELE_ZK632.5"/>
<dbReference type="UCSC" id="ZK632.5">
    <property type="organism name" value="c. elegans"/>
</dbReference>
<dbReference type="AGR" id="WB:WBGene00014014"/>
<dbReference type="CTD" id="176389"/>
<dbReference type="WormBase" id="ZK632.5">
    <property type="protein sequence ID" value="CE00422"/>
    <property type="gene ID" value="WBGene00014014"/>
</dbReference>
<dbReference type="eggNOG" id="ENOG502QXA4">
    <property type="taxonomic scope" value="Eukaryota"/>
</dbReference>
<dbReference type="HOGENOM" id="CLU_343956_0_0_1"/>
<dbReference type="InParanoid" id="P34651"/>
<dbReference type="OMA" id="FFHMNTT"/>
<dbReference type="OrthoDB" id="5800016at2759"/>
<dbReference type="PRO" id="PR:P34651"/>
<dbReference type="Proteomes" id="UP000001940">
    <property type="component" value="Chromosome III"/>
</dbReference>
<dbReference type="Bgee" id="WBGene00014014">
    <property type="expression patterns" value="Expressed in germ line (C elegans) and 4 other cell types or tissues"/>
</dbReference>
<dbReference type="Gene3D" id="1.20.120.1900">
    <property type="entry name" value="Gamma-tubulin complex, C-terminal domain"/>
    <property type="match status" value="1"/>
</dbReference>
<dbReference type="InterPro" id="IPR042241">
    <property type="entry name" value="GCP_C_sf"/>
</dbReference>
<proteinExistence type="predicted"/>
<gene>
    <name type="ORF">ZK632.5</name>
</gene>
<accession>P34651</accession>
<keyword id="KW-1185">Reference proteome</keyword>